<sequence length="859" mass="99530">MGEVTAEEVEKFLDSNIGFAKQYYNFHYRGKVISDLLGAKEAAVDFSNYHDVNSVEESEIIFDLLRDVQENLQAEKCTFNVMKKLCFLLRADRMSLFMYRTRNGIAELATRLFNVHKDAVLEDCLVMPDSEIVFPLDMGVVGHVAHSKKIANVPNTEEDEHFCDFVDNLTEYQTKNILASPIMNGKDVVAIIMAVNKIDEPHFTKRDEEILLKYLNFVNLIMKVFHLSYLHNCETRRGQILLWSGSKVFEELTDIERQFHKALYTVRAFLNCDRYSVGLLDMTKQKEFFDVWPVLMGEAPAYSGPRTPDGREINFYKVIDYILHGKEDIKVIPNPPADHWALVSGLPTYVAQNGLICNIMNAPAEDFFEFQKEPLDESGWMIKNVLSMPIVNKKEEIVGVATFYNRKDGKPFDDMDETLMESLTQFLGWSVLNPDTYESMNKLENRKDIFQDIVKYHVKCDNEEIQKILKTREVYGKEPWECEEEELAEILQGELPDAESYEINKFHFSDLPLTELELVKCGIQMYYELRVVDKFHIPQEALVRFMYSLSKGYRRITYHNWRHGFNVGQTMFSLLVTGKLKRYFTDLEALAMVTAAFCHDIDHRGTNNLYQMKSQNPLAKLHGSSILERHHLEFGKTLLRDESLNIFQNLNRRQHEHAIHMMDIAIIATDLALYFKKRTMFQKIVDQSKTYESTQEWTQYMMLEQTRKEIVMAMMMTACDLSAITKPWEVQSKVALLVAAEFWEQGDLERTVLQQNPIPMMDRNKADELPKLQVGFIDFVCTFVYKEFSRFHEEITPMLDGITNNRKEWKALADEYEAKMKALEEEKQKQQAAKQAASGNQPGGNPLQGAPASKSCCIQ</sequence>
<gene>
    <name evidence="7" type="primary">Pde6a</name>
    <name type="synonym">Mpa</name>
    <name type="synonym">Pdea</name>
</gene>
<organism>
    <name type="scientific">Mus musculus</name>
    <name type="common">Mouse</name>
    <dbReference type="NCBI Taxonomy" id="10090"/>
    <lineage>
        <taxon>Eukaryota</taxon>
        <taxon>Metazoa</taxon>
        <taxon>Chordata</taxon>
        <taxon>Craniata</taxon>
        <taxon>Vertebrata</taxon>
        <taxon>Euteleostomi</taxon>
        <taxon>Mammalia</taxon>
        <taxon>Eutheria</taxon>
        <taxon>Euarchontoglires</taxon>
        <taxon>Glires</taxon>
        <taxon>Rodentia</taxon>
        <taxon>Myomorpha</taxon>
        <taxon>Muroidea</taxon>
        <taxon>Muridae</taxon>
        <taxon>Murinae</taxon>
        <taxon>Mus</taxon>
        <taxon>Mus</taxon>
    </lineage>
</organism>
<accession>P27664</accession>
<accession>E9Q673</accession>
<reference key="1">
    <citation type="journal article" date="1991" name="FEBS Lett.">
        <title>Complete cDNA sequences of mouse rod photoreceptor cGMP phosphodiesterase alpha- and beta-subunits, and identification of beta'-, a putative beta-subunit isozyme produced by alternative splicing of the beta-subunit gene.</title>
        <authorList>
            <person name="Baehr W."/>
            <person name="Champagne M.S."/>
            <person name="Lee A.K."/>
            <person name="Pittler S.J."/>
        </authorList>
    </citation>
    <scope>NUCLEOTIDE SEQUENCE [MRNA]</scope>
    <source>
        <tissue>Retina</tissue>
    </source>
</reference>
<reference key="2">
    <citation type="journal article" date="2009" name="PLoS Biol.">
        <title>Lineage-specific biology revealed by a finished genome assembly of the mouse.</title>
        <authorList>
            <person name="Church D.M."/>
            <person name="Goodstadt L."/>
            <person name="Hillier L.W."/>
            <person name="Zody M.C."/>
            <person name="Goldstein S."/>
            <person name="She X."/>
            <person name="Bult C.J."/>
            <person name="Agarwala R."/>
            <person name="Cherry J.L."/>
            <person name="DiCuccio M."/>
            <person name="Hlavina W."/>
            <person name="Kapustin Y."/>
            <person name="Meric P."/>
            <person name="Maglott D."/>
            <person name="Birtle Z."/>
            <person name="Marques A.C."/>
            <person name="Graves T."/>
            <person name="Zhou S."/>
            <person name="Teague B."/>
            <person name="Potamousis K."/>
            <person name="Churas C."/>
            <person name="Place M."/>
            <person name="Herschleb J."/>
            <person name="Runnheim R."/>
            <person name="Forrest D."/>
            <person name="Amos-Landgraf J."/>
            <person name="Schwartz D.C."/>
            <person name="Cheng Z."/>
            <person name="Lindblad-Toh K."/>
            <person name="Eichler E.E."/>
            <person name="Ponting C.P."/>
        </authorList>
    </citation>
    <scope>NUCLEOTIDE SEQUENCE [LARGE SCALE GENOMIC DNA]</scope>
    <source>
        <strain>C57BL/6J</strain>
    </source>
</reference>
<feature type="initiator methionine" description="Removed" evidence="2">
    <location>
        <position position="1"/>
    </location>
</feature>
<feature type="chain" id="PRO_0000198829" description="Rod cGMP-specific 3',5'-cyclic phosphodiesterase subunit alpha">
    <location>
        <begin position="2"/>
        <end position="856"/>
    </location>
</feature>
<feature type="propeptide" id="PRO_0000396698" description="Removed in mature form" evidence="1">
    <location>
        <begin position="857"/>
        <end position="859"/>
    </location>
</feature>
<feature type="domain" description="GAF 1">
    <location>
        <begin position="73"/>
        <end position="222"/>
    </location>
</feature>
<feature type="domain" description="GAF 2">
    <location>
        <begin position="254"/>
        <end position="431"/>
    </location>
</feature>
<feature type="domain" description="PDEase" evidence="4">
    <location>
        <begin position="483"/>
        <end position="816"/>
    </location>
</feature>
<feature type="region of interest" description="Disordered" evidence="5">
    <location>
        <begin position="823"/>
        <end position="859"/>
    </location>
</feature>
<feature type="active site" description="Proton donor" evidence="1">
    <location>
        <position position="559"/>
    </location>
</feature>
<feature type="binding site" evidence="1">
    <location>
        <position position="563"/>
    </location>
    <ligand>
        <name>a divalent metal cation</name>
        <dbReference type="ChEBI" id="CHEBI:60240"/>
        <label>1</label>
    </ligand>
</feature>
<feature type="binding site" evidence="1">
    <location>
        <position position="599"/>
    </location>
    <ligand>
        <name>a divalent metal cation</name>
        <dbReference type="ChEBI" id="CHEBI:60240"/>
        <label>1</label>
    </ligand>
</feature>
<feature type="binding site" evidence="1">
    <location>
        <position position="600"/>
    </location>
    <ligand>
        <name>a divalent metal cation</name>
        <dbReference type="ChEBI" id="CHEBI:60240"/>
        <label>1</label>
    </ligand>
</feature>
<feature type="binding site" evidence="1">
    <location>
        <position position="600"/>
    </location>
    <ligand>
        <name>a divalent metal cation</name>
        <dbReference type="ChEBI" id="CHEBI:60240"/>
        <label>2</label>
    </ligand>
</feature>
<feature type="binding site" evidence="1">
    <location>
        <position position="720"/>
    </location>
    <ligand>
        <name>a divalent metal cation</name>
        <dbReference type="ChEBI" id="CHEBI:60240"/>
        <label>1</label>
    </ligand>
</feature>
<feature type="modified residue" description="N-acetylglycine" evidence="2">
    <location>
        <position position="2"/>
    </location>
</feature>
<feature type="modified residue" description="Cysteine methyl ester" evidence="1">
    <location>
        <position position="856"/>
    </location>
</feature>
<feature type="lipid moiety-binding region" description="S-farnesyl cysteine" evidence="1">
    <location>
        <position position="856"/>
    </location>
</feature>
<feature type="sequence conflict" description="In Ref. 1; CAA43072." evidence="6" ref="1">
    <original>F</original>
    <variation>L</variation>
    <location>
        <position position="26"/>
    </location>
</feature>
<feature type="sequence conflict" description="In Ref. 1; CAA43072." evidence="6" ref="1">
    <original>M</original>
    <variation>V</variation>
    <location>
        <position position="94"/>
    </location>
</feature>
<feature type="sequence conflict" description="In Ref. 1; CAA43072." evidence="6" ref="1">
    <original>T</original>
    <variation>P</variation>
    <location>
        <position position="348"/>
    </location>
</feature>
<feature type="sequence conflict" description="In Ref. 1; CAA43072." evidence="6" ref="1">
    <original>G</original>
    <variation>R</variation>
    <location>
        <position position="493"/>
    </location>
</feature>
<feature type="sequence conflict" description="In Ref. 1; CAA43072." evidence="6" ref="1">
    <original>V</original>
    <variation>W</variation>
    <location>
        <position position="532"/>
    </location>
</feature>
<keyword id="KW-0007">Acetylation</keyword>
<keyword id="KW-1003">Cell membrane</keyword>
<keyword id="KW-0966">Cell projection</keyword>
<keyword id="KW-0140">cGMP</keyword>
<keyword id="KW-0378">Hydrolase</keyword>
<keyword id="KW-0449">Lipoprotein</keyword>
<keyword id="KW-0472">Membrane</keyword>
<keyword id="KW-0479">Metal-binding</keyword>
<keyword id="KW-0488">Methylation</keyword>
<keyword id="KW-0636">Prenylation</keyword>
<keyword id="KW-1185">Reference proteome</keyword>
<keyword id="KW-0677">Repeat</keyword>
<keyword id="KW-0716">Sensory transduction</keyword>
<keyword id="KW-0844">Vision</keyword>
<comment type="function">
    <text evidence="3">Rod-specific cGMP phosphodiesterase that catalyzes the hydrolysis of 3',5'-cyclic GMP. This protein participates in processes of transmission and amplification of the visual signal.</text>
</comment>
<comment type="catalytic activity">
    <reaction evidence="3">
        <text>3',5'-cyclic GMP + H2O = GMP + H(+)</text>
        <dbReference type="Rhea" id="RHEA:16957"/>
        <dbReference type="ChEBI" id="CHEBI:15377"/>
        <dbReference type="ChEBI" id="CHEBI:15378"/>
        <dbReference type="ChEBI" id="CHEBI:57746"/>
        <dbReference type="ChEBI" id="CHEBI:58115"/>
        <dbReference type="EC" id="3.1.4.35"/>
    </reaction>
    <physiologicalReaction direction="left-to-right" evidence="3">
        <dbReference type="Rhea" id="RHEA:16958"/>
    </physiologicalReaction>
</comment>
<comment type="cofactor">
    <cofactor evidence="1">
        <name>a divalent metal cation</name>
        <dbReference type="ChEBI" id="CHEBI:60240"/>
    </cofactor>
    <text evidence="1">Binds 2 divalent metal cations per subunit. Site 1 may preferentially bind zinc ions, while site 2 has a preference for magnesium and/or manganese ions.</text>
</comment>
<comment type="subunit">
    <text>Oligomer composed of two catalytic chains (alpha and beta), an inhibitory chain (gamma) and the delta chain.</text>
</comment>
<comment type="subcellular location">
    <subcellularLocation>
        <location evidence="3">Cell membrane</location>
        <topology evidence="3">Lipid-anchor</topology>
        <orientation evidence="3">Cytoplasmic side</orientation>
    </subcellularLocation>
    <subcellularLocation>
        <location evidence="3">Cell projection</location>
        <location evidence="3">Cilium</location>
        <location evidence="3">Photoreceptor outer segment</location>
    </subcellularLocation>
</comment>
<comment type="similarity">
    <text evidence="6">Belongs to the cyclic nucleotide phosphodiesterase family.</text>
</comment>
<name>PDE6A_MOUSE</name>
<dbReference type="EC" id="3.1.4.35" evidence="3"/>
<dbReference type="EMBL" id="X60664">
    <property type="protein sequence ID" value="CAA43072.1"/>
    <property type="molecule type" value="mRNA"/>
</dbReference>
<dbReference type="EMBL" id="AC121903">
    <property type="status" value="NOT_ANNOTATED_CDS"/>
    <property type="molecule type" value="Genomic_DNA"/>
</dbReference>
<dbReference type="EMBL" id="AC148012">
    <property type="status" value="NOT_ANNOTATED_CDS"/>
    <property type="molecule type" value="Genomic_DNA"/>
</dbReference>
<dbReference type="PIR" id="S13030">
    <property type="entry name" value="S13030"/>
</dbReference>
<dbReference type="SMR" id="P27664"/>
<dbReference type="CORUM" id="P27664"/>
<dbReference type="FunCoup" id="P27664">
    <property type="interactions" value="108"/>
</dbReference>
<dbReference type="IntAct" id="P27664">
    <property type="interactions" value="1"/>
</dbReference>
<dbReference type="STRING" id="10090.ENSMUSP00000025468"/>
<dbReference type="iPTMnet" id="P27664"/>
<dbReference type="PhosphoSitePlus" id="P27664"/>
<dbReference type="PaxDb" id="10090-ENSMUSP00000025468"/>
<dbReference type="ProteomicsDB" id="288015"/>
<dbReference type="AGR" id="MGI:97524"/>
<dbReference type="MGI" id="MGI:97524">
    <property type="gene designation" value="Pde6a"/>
</dbReference>
<dbReference type="eggNOG" id="KOG3689">
    <property type="taxonomic scope" value="Eukaryota"/>
</dbReference>
<dbReference type="InParanoid" id="P27664"/>
<dbReference type="Reactome" id="R-MMU-2485179">
    <property type="pathway name" value="Activation of the phototransduction cascade"/>
</dbReference>
<dbReference type="Reactome" id="R-MMU-2514859">
    <property type="pathway name" value="Inactivation, recovery and regulation of the phototransduction cascade"/>
</dbReference>
<dbReference type="Reactome" id="R-MMU-4086398">
    <property type="pathway name" value="Ca2+ pathway"/>
</dbReference>
<dbReference type="ChiTaRS" id="Pde6a">
    <property type="organism name" value="mouse"/>
</dbReference>
<dbReference type="PRO" id="PR:P27664"/>
<dbReference type="Proteomes" id="UP000000589">
    <property type="component" value="Unplaced"/>
</dbReference>
<dbReference type="RNAct" id="P27664">
    <property type="molecule type" value="protein"/>
</dbReference>
<dbReference type="GO" id="GO:0001750">
    <property type="term" value="C:photoreceptor outer segment"/>
    <property type="evidence" value="ECO:0007669"/>
    <property type="project" value="UniProtKB-SubCell"/>
</dbReference>
<dbReference type="GO" id="GO:0005886">
    <property type="term" value="C:plasma membrane"/>
    <property type="evidence" value="ECO:0000304"/>
    <property type="project" value="Reactome"/>
</dbReference>
<dbReference type="GO" id="GO:0047555">
    <property type="term" value="F:3',5'-cyclic-GMP phosphodiesterase activity"/>
    <property type="evidence" value="ECO:0007669"/>
    <property type="project" value="UniProtKB-EC"/>
</dbReference>
<dbReference type="GO" id="GO:0046872">
    <property type="term" value="F:metal ion binding"/>
    <property type="evidence" value="ECO:0007669"/>
    <property type="project" value="UniProtKB-KW"/>
</dbReference>
<dbReference type="GO" id="GO:0045494">
    <property type="term" value="P:photoreceptor cell maintenance"/>
    <property type="evidence" value="ECO:0000315"/>
    <property type="project" value="MGI"/>
</dbReference>
<dbReference type="GO" id="GO:0060041">
    <property type="term" value="P:retina development in camera-type eye"/>
    <property type="evidence" value="ECO:0000315"/>
    <property type="project" value="MGI"/>
</dbReference>
<dbReference type="GO" id="GO:0007165">
    <property type="term" value="P:signal transduction"/>
    <property type="evidence" value="ECO:0007669"/>
    <property type="project" value="InterPro"/>
</dbReference>
<dbReference type="GO" id="GO:0007601">
    <property type="term" value="P:visual perception"/>
    <property type="evidence" value="ECO:0007669"/>
    <property type="project" value="UniProtKB-KW"/>
</dbReference>
<dbReference type="CDD" id="cd00077">
    <property type="entry name" value="HDc"/>
    <property type="match status" value="1"/>
</dbReference>
<dbReference type="FunFam" id="1.10.1300.10:FF:000005">
    <property type="entry name" value="Phosphodiesterase"/>
    <property type="match status" value="1"/>
</dbReference>
<dbReference type="FunFam" id="3.30.450.40:FF:000001">
    <property type="entry name" value="Phosphodiesterase"/>
    <property type="match status" value="1"/>
</dbReference>
<dbReference type="FunFam" id="3.30.450.40:FF:000010">
    <property type="entry name" value="Phosphodiesterase"/>
    <property type="match status" value="1"/>
</dbReference>
<dbReference type="Gene3D" id="3.30.450.40">
    <property type="match status" value="2"/>
</dbReference>
<dbReference type="Gene3D" id="1.10.1300.10">
    <property type="entry name" value="3'5'-cyclic nucleotide phosphodiesterase, catalytic domain"/>
    <property type="match status" value="1"/>
</dbReference>
<dbReference type="InterPro" id="IPR003018">
    <property type="entry name" value="GAF"/>
</dbReference>
<dbReference type="InterPro" id="IPR029016">
    <property type="entry name" value="GAF-like_dom_sf"/>
</dbReference>
<dbReference type="InterPro" id="IPR003607">
    <property type="entry name" value="HD/PDEase_dom"/>
</dbReference>
<dbReference type="InterPro" id="IPR023088">
    <property type="entry name" value="PDEase"/>
</dbReference>
<dbReference type="InterPro" id="IPR002073">
    <property type="entry name" value="PDEase_catalytic_dom"/>
</dbReference>
<dbReference type="InterPro" id="IPR036971">
    <property type="entry name" value="PDEase_catalytic_dom_sf"/>
</dbReference>
<dbReference type="InterPro" id="IPR023174">
    <property type="entry name" value="PDEase_CS"/>
</dbReference>
<dbReference type="PANTHER" id="PTHR11347">
    <property type="entry name" value="CYCLIC NUCLEOTIDE PHOSPHODIESTERASE"/>
    <property type="match status" value="1"/>
</dbReference>
<dbReference type="Pfam" id="PF01590">
    <property type="entry name" value="GAF"/>
    <property type="match status" value="2"/>
</dbReference>
<dbReference type="Pfam" id="PF00233">
    <property type="entry name" value="PDEase_I"/>
    <property type="match status" value="1"/>
</dbReference>
<dbReference type="PRINTS" id="PR00387">
    <property type="entry name" value="PDIESTERASE1"/>
</dbReference>
<dbReference type="SMART" id="SM00065">
    <property type="entry name" value="GAF"/>
    <property type="match status" value="2"/>
</dbReference>
<dbReference type="SMART" id="SM00471">
    <property type="entry name" value="HDc"/>
    <property type="match status" value="1"/>
</dbReference>
<dbReference type="SUPFAM" id="SSF55781">
    <property type="entry name" value="GAF domain-like"/>
    <property type="match status" value="2"/>
</dbReference>
<dbReference type="SUPFAM" id="SSF109604">
    <property type="entry name" value="HD-domain/PDEase-like"/>
    <property type="match status" value="1"/>
</dbReference>
<dbReference type="PROSITE" id="PS00126">
    <property type="entry name" value="PDEASE_I_1"/>
    <property type="match status" value="1"/>
</dbReference>
<dbReference type="PROSITE" id="PS51845">
    <property type="entry name" value="PDEASE_I_2"/>
    <property type="match status" value="1"/>
</dbReference>
<evidence type="ECO:0000250" key="1"/>
<evidence type="ECO:0000250" key="2">
    <source>
        <dbReference type="UniProtKB" id="P11541"/>
    </source>
</evidence>
<evidence type="ECO:0000250" key="3">
    <source>
        <dbReference type="UniProtKB" id="P16499"/>
    </source>
</evidence>
<evidence type="ECO:0000255" key="4">
    <source>
        <dbReference type="PROSITE-ProRule" id="PRU01192"/>
    </source>
</evidence>
<evidence type="ECO:0000256" key="5">
    <source>
        <dbReference type="SAM" id="MobiDB-lite"/>
    </source>
</evidence>
<evidence type="ECO:0000305" key="6"/>
<evidence type="ECO:0000312" key="7">
    <source>
        <dbReference type="MGI" id="MGI:97524"/>
    </source>
</evidence>
<proteinExistence type="evidence at transcript level"/>
<protein>
    <recommendedName>
        <fullName evidence="6">Rod cGMP-specific 3',5'-cyclic phosphodiesterase subunit alpha</fullName>
        <shortName>GMP-PDE alpha</shortName>
        <ecNumber evidence="3">3.1.4.35</ecNumber>
    </recommendedName>
</protein>